<dbReference type="EC" id="5.6.1.7" evidence="1"/>
<dbReference type="EMBL" id="CP000304">
    <property type="protein sequence ID" value="ABP80783.1"/>
    <property type="molecule type" value="Genomic_DNA"/>
</dbReference>
<dbReference type="RefSeq" id="WP_011914233.1">
    <property type="nucleotide sequence ID" value="NC_009434.1"/>
</dbReference>
<dbReference type="SMR" id="A4VP82"/>
<dbReference type="GeneID" id="66822531"/>
<dbReference type="KEGG" id="psa:PST_3145"/>
<dbReference type="eggNOG" id="COG0459">
    <property type="taxonomic scope" value="Bacteria"/>
</dbReference>
<dbReference type="HOGENOM" id="CLU_016503_3_0_6"/>
<dbReference type="Proteomes" id="UP000000233">
    <property type="component" value="Chromosome"/>
</dbReference>
<dbReference type="GO" id="GO:0005737">
    <property type="term" value="C:cytoplasm"/>
    <property type="evidence" value="ECO:0007669"/>
    <property type="project" value="UniProtKB-SubCell"/>
</dbReference>
<dbReference type="GO" id="GO:0005524">
    <property type="term" value="F:ATP binding"/>
    <property type="evidence" value="ECO:0007669"/>
    <property type="project" value="UniProtKB-UniRule"/>
</dbReference>
<dbReference type="GO" id="GO:0140662">
    <property type="term" value="F:ATP-dependent protein folding chaperone"/>
    <property type="evidence" value="ECO:0007669"/>
    <property type="project" value="InterPro"/>
</dbReference>
<dbReference type="GO" id="GO:0016853">
    <property type="term" value="F:isomerase activity"/>
    <property type="evidence" value="ECO:0007669"/>
    <property type="project" value="UniProtKB-KW"/>
</dbReference>
<dbReference type="GO" id="GO:0051082">
    <property type="term" value="F:unfolded protein binding"/>
    <property type="evidence" value="ECO:0007669"/>
    <property type="project" value="UniProtKB-UniRule"/>
</dbReference>
<dbReference type="GO" id="GO:0042026">
    <property type="term" value="P:protein refolding"/>
    <property type="evidence" value="ECO:0007669"/>
    <property type="project" value="UniProtKB-UniRule"/>
</dbReference>
<dbReference type="CDD" id="cd03344">
    <property type="entry name" value="GroEL"/>
    <property type="match status" value="1"/>
</dbReference>
<dbReference type="FunFam" id="1.10.560.10:FF:000001">
    <property type="entry name" value="60 kDa chaperonin"/>
    <property type="match status" value="1"/>
</dbReference>
<dbReference type="FunFam" id="3.50.7.10:FF:000001">
    <property type="entry name" value="60 kDa chaperonin"/>
    <property type="match status" value="1"/>
</dbReference>
<dbReference type="Gene3D" id="3.50.7.10">
    <property type="entry name" value="GroEL"/>
    <property type="match status" value="1"/>
</dbReference>
<dbReference type="Gene3D" id="1.10.560.10">
    <property type="entry name" value="GroEL-like equatorial domain"/>
    <property type="match status" value="1"/>
</dbReference>
<dbReference type="Gene3D" id="3.30.260.10">
    <property type="entry name" value="TCP-1-like chaperonin intermediate domain"/>
    <property type="match status" value="1"/>
</dbReference>
<dbReference type="HAMAP" id="MF_00600">
    <property type="entry name" value="CH60"/>
    <property type="match status" value="1"/>
</dbReference>
<dbReference type="InterPro" id="IPR018370">
    <property type="entry name" value="Chaperonin_Cpn60_CS"/>
</dbReference>
<dbReference type="InterPro" id="IPR001844">
    <property type="entry name" value="Cpn60/GroEL"/>
</dbReference>
<dbReference type="InterPro" id="IPR002423">
    <property type="entry name" value="Cpn60/GroEL/TCP-1"/>
</dbReference>
<dbReference type="InterPro" id="IPR027409">
    <property type="entry name" value="GroEL-like_apical_dom_sf"/>
</dbReference>
<dbReference type="InterPro" id="IPR027413">
    <property type="entry name" value="GROEL-like_equatorial_sf"/>
</dbReference>
<dbReference type="InterPro" id="IPR027410">
    <property type="entry name" value="TCP-1-like_intermed_sf"/>
</dbReference>
<dbReference type="NCBIfam" id="TIGR02348">
    <property type="entry name" value="GroEL"/>
    <property type="match status" value="1"/>
</dbReference>
<dbReference type="NCBIfam" id="NF000592">
    <property type="entry name" value="PRK00013.1"/>
    <property type="match status" value="1"/>
</dbReference>
<dbReference type="NCBIfam" id="NF009487">
    <property type="entry name" value="PRK12849.1"/>
    <property type="match status" value="1"/>
</dbReference>
<dbReference type="NCBIfam" id="NF009488">
    <property type="entry name" value="PRK12850.1"/>
    <property type="match status" value="1"/>
</dbReference>
<dbReference type="NCBIfam" id="NF009489">
    <property type="entry name" value="PRK12851.1"/>
    <property type="match status" value="1"/>
</dbReference>
<dbReference type="PANTHER" id="PTHR45633">
    <property type="entry name" value="60 KDA HEAT SHOCK PROTEIN, MITOCHONDRIAL"/>
    <property type="match status" value="1"/>
</dbReference>
<dbReference type="Pfam" id="PF00118">
    <property type="entry name" value="Cpn60_TCP1"/>
    <property type="match status" value="1"/>
</dbReference>
<dbReference type="PRINTS" id="PR00298">
    <property type="entry name" value="CHAPERONIN60"/>
</dbReference>
<dbReference type="SUPFAM" id="SSF52029">
    <property type="entry name" value="GroEL apical domain-like"/>
    <property type="match status" value="1"/>
</dbReference>
<dbReference type="SUPFAM" id="SSF48592">
    <property type="entry name" value="GroEL equatorial domain-like"/>
    <property type="match status" value="1"/>
</dbReference>
<dbReference type="SUPFAM" id="SSF54849">
    <property type="entry name" value="GroEL-intermediate domain like"/>
    <property type="match status" value="1"/>
</dbReference>
<dbReference type="PROSITE" id="PS00296">
    <property type="entry name" value="CHAPERONINS_CPN60"/>
    <property type="match status" value="1"/>
</dbReference>
<name>CH60_STUS1</name>
<comment type="function">
    <text evidence="1">Together with its co-chaperonin GroES, plays an essential role in assisting protein folding. The GroEL-GroES system forms a nano-cage that allows encapsulation of the non-native substrate proteins and provides a physical environment optimized to promote and accelerate protein folding.</text>
</comment>
<comment type="catalytic activity">
    <reaction evidence="1">
        <text>ATP + H2O + a folded polypeptide = ADP + phosphate + an unfolded polypeptide.</text>
        <dbReference type="EC" id="5.6.1.7"/>
    </reaction>
</comment>
<comment type="subunit">
    <text evidence="1">Forms a cylinder of 14 subunits composed of two heptameric rings stacked back-to-back. Interacts with the co-chaperonin GroES.</text>
</comment>
<comment type="subcellular location">
    <subcellularLocation>
        <location evidence="1">Cytoplasm</location>
    </subcellularLocation>
</comment>
<comment type="similarity">
    <text evidence="1">Belongs to the chaperonin (HSP60) family.</text>
</comment>
<keyword id="KW-0067">ATP-binding</keyword>
<keyword id="KW-0143">Chaperone</keyword>
<keyword id="KW-0963">Cytoplasm</keyword>
<keyword id="KW-0413">Isomerase</keyword>
<keyword id="KW-0547">Nucleotide-binding</keyword>
<keyword id="KW-1185">Reference proteome</keyword>
<protein>
    <recommendedName>
        <fullName evidence="1">Chaperonin GroEL</fullName>
        <ecNumber evidence="1">5.6.1.7</ecNumber>
    </recommendedName>
    <alternativeName>
        <fullName evidence="1">60 kDa chaperonin</fullName>
    </alternativeName>
    <alternativeName>
        <fullName evidence="1">Chaperonin-60</fullName>
        <shortName evidence="1">Cpn60</shortName>
    </alternativeName>
</protein>
<reference key="1">
    <citation type="journal article" date="2008" name="Proc. Natl. Acad. Sci. U.S.A.">
        <title>Nitrogen fixation island and rhizosphere competence traits in the genome of root-associated Pseudomonas stutzeri A1501.</title>
        <authorList>
            <person name="Yan Y."/>
            <person name="Yang J."/>
            <person name="Dou Y."/>
            <person name="Chen M."/>
            <person name="Ping S."/>
            <person name="Peng J."/>
            <person name="Lu W."/>
            <person name="Zhang W."/>
            <person name="Yao Z."/>
            <person name="Li H."/>
            <person name="Liu W."/>
            <person name="He S."/>
            <person name="Geng L."/>
            <person name="Zhang X."/>
            <person name="Yang F."/>
            <person name="Yu H."/>
            <person name="Zhan Y."/>
            <person name="Li D."/>
            <person name="Lin Z."/>
            <person name="Wang Y."/>
            <person name="Elmerich C."/>
            <person name="Lin M."/>
            <person name="Jin Q."/>
        </authorList>
    </citation>
    <scope>NUCLEOTIDE SEQUENCE [LARGE SCALE GENOMIC DNA]</scope>
    <source>
        <strain>A1501</strain>
    </source>
</reference>
<gene>
    <name evidence="1" type="primary">groEL</name>
    <name evidence="1" type="synonym">groL</name>
    <name type="ordered locus">PST_3145</name>
</gene>
<proteinExistence type="inferred from homology"/>
<accession>A4VP82</accession>
<sequence>MAAKEVKFGDSARKKMLVGVNVLADAVKATLGPKGRNVVLEKSFGAPTITKDGVSVAKEIELKDRFENMGAQLVKDVASKANDEAGDGTTTATVLAQAIVNEGLKAVAAGMNPMDLKRGIDKATIAIVAELKQLAKPCTDSKAIAQVGTISANSDESIGQIIAEAMERVGKEGVITVEEGSGFENELSVVEGMQFDRGYLSPYFINKPDTMVAELDNPLLLLVDKKISNIRELLPVLEGVAKAGRPLLIVAEDVEGEALATLVVNNMRGIVKVAAVKAPGFGDRRKAMLQDIAILTGGTVISEEVGLSLETATLEHLGNAKRVVLNKENTTIIDGAGAQADIEARVAQIRKQIEDTTSDYDKEKLQERLAKLAGGVAVIKVGAGTEVEMKEKKARVEDALHATRAAVEEGVVPGGGVALVRALQAISELKGDNEDQNVGIALLRRAVEAPLRQIVANAGGEPSVVVDKVKQGSGNYGFNAASDTYGDMIEMGILDPAKVTRSALQAAASIGGLMVTTEAMVAEVVEDKPAPAMPDMGGMGGMGGMM</sequence>
<feature type="chain" id="PRO_1000025823" description="Chaperonin GroEL">
    <location>
        <begin position="1"/>
        <end position="546"/>
    </location>
</feature>
<feature type="binding site" evidence="1">
    <location>
        <begin position="30"/>
        <end position="33"/>
    </location>
    <ligand>
        <name>ATP</name>
        <dbReference type="ChEBI" id="CHEBI:30616"/>
    </ligand>
</feature>
<feature type="binding site" evidence="1">
    <location>
        <position position="51"/>
    </location>
    <ligand>
        <name>ATP</name>
        <dbReference type="ChEBI" id="CHEBI:30616"/>
    </ligand>
</feature>
<feature type="binding site" evidence="1">
    <location>
        <begin position="87"/>
        <end position="91"/>
    </location>
    <ligand>
        <name>ATP</name>
        <dbReference type="ChEBI" id="CHEBI:30616"/>
    </ligand>
</feature>
<feature type="binding site" evidence="1">
    <location>
        <position position="415"/>
    </location>
    <ligand>
        <name>ATP</name>
        <dbReference type="ChEBI" id="CHEBI:30616"/>
    </ligand>
</feature>
<feature type="binding site" evidence="1">
    <location>
        <begin position="479"/>
        <end position="481"/>
    </location>
    <ligand>
        <name>ATP</name>
        <dbReference type="ChEBI" id="CHEBI:30616"/>
    </ligand>
</feature>
<feature type="binding site" evidence="1">
    <location>
        <position position="495"/>
    </location>
    <ligand>
        <name>ATP</name>
        <dbReference type="ChEBI" id="CHEBI:30616"/>
    </ligand>
</feature>
<organism>
    <name type="scientific">Stutzerimonas stutzeri (strain A1501)</name>
    <name type="common">Pseudomonas stutzeri</name>
    <dbReference type="NCBI Taxonomy" id="379731"/>
    <lineage>
        <taxon>Bacteria</taxon>
        <taxon>Pseudomonadati</taxon>
        <taxon>Pseudomonadota</taxon>
        <taxon>Gammaproteobacteria</taxon>
        <taxon>Pseudomonadales</taxon>
        <taxon>Pseudomonadaceae</taxon>
        <taxon>Stutzerimonas</taxon>
    </lineage>
</organism>
<evidence type="ECO:0000255" key="1">
    <source>
        <dbReference type="HAMAP-Rule" id="MF_00600"/>
    </source>
</evidence>